<proteinExistence type="inferred from homology"/>
<keyword id="KW-0256">Endoplasmic reticulum</keyword>
<keyword id="KW-0444">Lipid biosynthesis</keyword>
<keyword id="KW-0443">Lipid metabolism</keyword>
<keyword id="KW-0472">Membrane</keyword>
<keyword id="KW-0489">Methyltransferase</keyword>
<keyword id="KW-0594">Phospholipid biosynthesis</keyword>
<keyword id="KW-1208">Phospholipid metabolism</keyword>
<keyword id="KW-1185">Reference proteome</keyword>
<keyword id="KW-0949">S-adenosyl-L-methionine</keyword>
<keyword id="KW-0808">Transferase</keyword>
<keyword id="KW-0812">Transmembrane</keyword>
<keyword id="KW-1133">Transmembrane helix</keyword>
<dbReference type="EC" id="2.1.1.17" evidence="1"/>
<dbReference type="EMBL" id="CP009816">
    <property type="protein sequence ID" value="ATZ55788.1"/>
    <property type="molecule type" value="Genomic_DNA"/>
</dbReference>
<dbReference type="SMR" id="A6S950"/>
<dbReference type="EnsemblFungi" id="Bcin12g03480.1">
    <property type="protein sequence ID" value="Bcin12p03480.1"/>
    <property type="gene ID" value="Bcin12g03480"/>
</dbReference>
<dbReference type="VEuPathDB" id="FungiDB:Bcin12g03480"/>
<dbReference type="OrthoDB" id="4583at2759"/>
<dbReference type="UniPathway" id="UPA00753"/>
<dbReference type="Proteomes" id="UP000001798">
    <property type="component" value="Chromosome bcin12"/>
</dbReference>
<dbReference type="GO" id="GO:0032541">
    <property type="term" value="C:cortical endoplasmic reticulum"/>
    <property type="evidence" value="ECO:0007669"/>
    <property type="project" value="EnsemblFungi"/>
</dbReference>
<dbReference type="GO" id="GO:0005789">
    <property type="term" value="C:endoplasmic reticulum membrane"/>
    <property type="evidence" value="ECO:0007669"/>
    <property type="project" value="UniProtKB-SubCell"/>
</dbReference>
<dbReference type="GO" id="GO:0097038">
    <property type="term" value="C:perinuclear endoplasmic reticulum"/>
    <property type="evidence" value="ECO:0007669"/>
    <property type="project" value="EnsemblFungi"/>
</dbReference>
<dbReference type="GO" id="GO:0004608">
    <property type="term" value="F:phosphatidylethanolamine N-methyltransferase activity"/>
    <property type="evidence" value="ECO:0007669"/>
    <property type="project" value="UniProtKB-UniRule"/>
</dbReference>
<dbReference type="GO" id="GO:0032259">
    <property type="term" value="P:methylation"/>
    <property type="evidence" value="ECO:0007669"/>
    <property type="project" value="UniProtKB-KW"/>
</dbReference>
<dbReference type="GO" id="GO:0006656">
    <property type="term" value="P:phosphatidylcholine biosynthetic process"/>
    <property type="evidence" value="ECO:0007669"/>
    <property type="project" value="UniProtKB-UniRule"/>
</dbReference>
<dbReference type="HAMAP" id="MF_03217">
    <property type="entry name" value="PEMT"/>
    <property type="match status" value="1"/>
</dbReference>
<dbReference type="InterPro" id="IPR007318">
    <property type="entry name" value="Phopholipid_MeTrfase"/>
</dbReference>
<dbReference type="InterPro" id="IPR016219">
    <property type="entry name" value="Phosphatid-EA_MeTrfase_fun"/>
</dbReference>
<dbReference type="PANTHER" id="PTHR32138">
    <property type="entry name" value="PHOSPHATIDYLETHANOLAMINE N-METHYLTRANSFERASE"/>
    <property type="match status" value="1"/>
</dbReference>
<dbReference type="PANTHER" id="PTHR32138:SF0">
    <property type="entry name" value="PHOSPHATIDYLETHANOLAMINE N-METHYLTRANSFERASE"/>
    <property type="match status" value="1"/>
</dbReference>
<dbReference type="Pfam" id="PF04191">
    <property type="entry name" value="PEMT"/>
    <property type="match status" value="2"/>
</dbReference>
<dbReference type="PIRSF" id="PIRSF000383">
    <property type="entry name" value="PEAMT"/>
    <property type="match status" value="1"/>
</dbReference>
<dbReference type="PROSITE" id="PS51598">
    <property type="entry name" value="SAM_CHO2"/>
    <property type="match status" value="1"/>
</dbReference>
<organism>
    <name type="scientific">Botryotinia fuckeliana (strain B05.10)</name>
    <name type="common">Noble rot fungus</name>
    <name type="synonym">Botrytis cinerea</name>
    <dbReference type="NCBI Taxonomy" id="332648"/>
    <lineage>
        <taxon>Eukaryota</taxon>
        <taxon>Fungi</taxon>
        <taxon>Dikarya</taxon>
        <taxon>Ascomycota</taxon>
        <taxon>Pezizomycotina</taxon>
        <taxon>Leotiomycetes</taxon>
        <taxon>Helotiales</taxon>
        <taxon>Sclerotiniaceae</taxon>
        <taxon>Botrytis</taxon>
    </lineage>
</organism>
<accession>A6S950</accession>
<accession>A0A384JZ26</accession>
<feature type="chain" id="PRO_0000405880" description="Phosphatidylethanolamine N-methyltransferase">
    <location>
        <begin position="1"/>
        <end position="987"/>
    </location>
</feature>
<feature type="topological domain" description="Lumenal" evidence="1">
    <location>
        <begin position="1"/>
        <end position="83"/>
    </location>
</feature>
<feature type="transmembrane region" description="Helical" evidence="1">
    <location>
        <begin position="84"/>
        <end position="104"/>
    </location>
</feature>
<feature type="topological domain" description="Cytoplasmic" evidence="1">
    <location>
        <begin position="105"/>
        <end position="107"/>
    </location>
</feature>
<feature type="transmembrane region" description="Helical" evidence="1">
    <location>
        <begin position="108"/>
        <end position="128"/>
    </location>
</feature>
<feature type="topological domain" description="Lumenal" evidence="1">
    <location>
        <begin position="129"/>
        <end position="193"/>
    </location>
</feature>
<feature type="transmembrane region" description="Helical" evidence="1">
    <location>
        <begin position="194"/>
        <end position="214"/>
    </location>
</feature>
<feature type="topological domain" description="Cytoplasmic" evidence="1">
    <location>
        <begin position="215"/>
        <end position="221"/>
    </location>
</feature>
<feature type="transmembrane region" description="Helical" evidence="1">
    <location>
        <begin position="222"/>
        <end position="242"/>
    </location>
</feature>
<feature type="topological domain" description="Lumenal" evidence="1">
    <location>
        <begin position="243"/>
        <end position="271"/>
    </location>
</feature>
<feature type="transmembrane region" description="Helical" evidence="1">
    <location>
        <begin position="272"/>
        <end position="292"/>
    </location>
</feature>
<feature type="topological domain" description="Cytoplasmic" evidence="1">
    <location>
        <begin position="293"/>
        <end position="298"/>
    </location>
</feature>
<feature type="transmembrane region" description="Helical" evidence="1">
    <location>
        <begin position="299"/>
        <end position="319"/>
    </location>
</feature>
<feature type="topological domain" description="Lumenal" evidence="1">
    <location>
        <begin position="320"/>
        <end position="393"/>
    </location>
</feature>
<feature type="transmembrane region" description="Helical" evidence="1">
    <location>
        <begin position="394"/>
        <end position="414"/>
    </location>
</feature>
<feature type="topological domain" description="Cytoplasmic" evidence="1">
    <location>
        <begin position="415"/>
        <end position="421"/>
    </location>
</feature>
<feature type="transmembrane region" description="Helical" evidence="1">
    <location>
        <begin position="422"/>
        <end position="442"/>
    </location>
</feature>
<feature type="topological domain" description="Lumenal" evidence="1">
    <location>
        <begin position="443"/>
        <end position="483"/>
    </location>
</feature>
<feature type="transmembrane region" description="Helical" evidence="1">
    <location>
        <begin position="484"/>
        <end position="504"/>
    </location>
</feature>
<feature type="topological domain" description="Cytoplasmic" evidence="1">
    <location>
        <begin position="505"/>
        <end position="507"/>
    </location>
</feature>
<feature type="transmembrane region" description="Helical" evidence="1">
    <location>
        <begin position="508"/>
        <end position="528"/>
    </location>
</feature>
<feature type="topological domain" description="Lumenal" evidence="1">
    <location>
        <begin position="529"/>
        <end position="560"/>
    </location>
</feature>
<feature type="transmembrane region" description="Helical" evidence="1">
    <location>
        <begin position="561"/>
        <end position="581"/>
    </location>
</feature>
<feature type="topological domain" description="Cytoplasmic" evidence="1">
    <location>
        <begin position="582"/>
        <end position="987"/>
    </location>
</feature>
<feature type="region of interest" description="Disordered" evidence="2">
    <location>
        <begin position="1"/>
        <end position="56"/>
    </location>
</feature>
<feature type="region of interest" description="Disordered" evidence="2">
    <location>
        <begin position="327"/>
        <end position="348"/>
    </location>
</feature>
<feature type="compositionally biased region" description="Polar residues" evidence="2">
    <location>
        <begin position="1"/>
        <end position="12"/>
    </location>
</feature>
<feature type="compositionally biased region" description="Polar residues" evidence="2">
    <location>
        <begin position="19"/>
        <end position="28"/>
    </location>
</feature>
<name>CHO2_BOTFB</name>
<reference key="1">
    <citation type="journal article" date="2011" name="PLoS Genet.">
        <title>Genomic analysis of the necrotrophic fungal pathogens Sclerotinia sclerotiorum and Botrytis cinerea.</title>
        <authorList>
            <person name="Amselem J."/>
            <person name="Cuomo C.A."/>
            <person name="van Kan J.A.L."/>
            <person name="Viaud M."/>
            <person name="Benito E.P."/>
            <person name="Couloux A."/>
            <person name="Coutinho P.M."/>
            <person name="de Vries R.P."/>
            <person name="Dyer P.S."/>
            <person name="Fillinger S."/>
            <person name="Fournier E."/>
            <person name="Gout L."/>
            <person name="Hahn M."/>
            <person name="Kohn L."/>
            <person name="Lapalu N."/>
            <person name="Plummer K.M."/>
            <person name="Pradier J.-M."/>
            <person name="Quevillon E."/>
            <person name="Sharon A."/>
            <person name="Simon A."/>
            <person name="ten Have A."/>
            <person name="Tudzynski B."/>
            <person name="Tudzynski P."/>
            <person name="Wincker P."/>
            <person name="Andrew M."/>
            <person name="Anthouard V."/>
            <person name="Beever R.E."/>
            <person name="Beffa R."/>
            <person name="Benoit I."/>
            <person name="Bouzid O."/>
            <person name="Brault B."/>
            <person name="Chen Z."/>
            <person name="Choquer M."/>
            <person name="Collemare J."/>
            <person name="Cotton P."/>
            <person name="Danchin E.G."/>
            <person name="Da Silva C."/>
            <person name="Gautier A."/>
            <person name="Giraud C."/>
            <person name="Giraud T."/>
            <person name="Gonzalez C."/>
            <person name="Grossetete S."/>
            <person name="Gueldener U."/>
            <person name="Henrissat B."/>
            <person name="Howlett B.J."/>
            <person name="Kodira C."/>
            <person name="Kretschmer M."/>
            <person name="Lappartient A."/>
            <person name="Leroch M."/>
            <person name="Levis C."/>
            <person name="Mauceli E."/>
            <person name="Neuveglise C."/>
            <person name="Oeser B."/>
            <person name="Pearson M."/>
            <person name="Poulain J."/>
            <person name="Poussereau N."/>
            <person name="Quesneville H."/>
            <person name="Rascle C."/>
            <person name="Schumacher J."/>
            <person name="Segurens B."/>
            <person name="Sexton A."/>
            <person name="Silva E."/>
            <person name="Sirven C."/>
            <person name="Soanes D.M."/>
            <person name="Talbot N.J."/>
            <person name="Templeton M."/>
            <person name="Yandava C."/>
            <person name="Yarden O."/>
            <person name="Zeng Q."/>
            <person name="Rollins J.A."/>
            <person name="Lebrun M.-H."/>
            <person name="Dickman M."/>
        </authorList>
    </citation>
    <scope>NUCLEOTIDE SEQUENCE [LARGE SCALE GENOMIC DNA]</scope>
    <source>
        <strain>B05.10</strain>
    </source>
</reference>
<reference key="2">
    <citation type="journal article" date="2012" name="Eukaryot. Cell">
        <title>Genome update of Botrytis cinerea strains B05.10 and T4.</title>
        <authorList>
            <person name="Staats M."/>
            <person name="van Kan J.A.L."/>
        </authorList>
    </citation>
    <scope>NUCLEOTIDE SEQUENCE [LARGE SCALE GENOMIC DNA]</scope>
    <scope>GENOME REANNOTATION</scope>
    <source>
        <strain>B05.10</strain>
    </source>
</reference>
<reference key="3">
    <citation type="journal article" date="2017" name="Mol. Plant Pathol.">
        <title>A gapless genome sequence of the fungus Botrytis cinerea.</title>
        <authorList>
            <person name="van Kan J.A.L."/>
            <person name="Stassen J.H.M."/>
            <person name="Mosbach A."/>
            <person name="van der Lee T.A.J."/>
            <person name="Faino L."/>
            <person name="Farmer A.D."/>
            <person name="Papasotiriou D.G."/>
            <person name="Zhou S."/>
            <person name="Seidl M.F."/>
            <person name="Cottam E."/>
            <person name="Edel D."/>
            <person name="Hahn M."/>
            <person name="Schwartz D.C."/>
            <person name="Dietrich R.A."/>
            <person name="Widdison S."/>
            <person name="Scalliet G."/>
        </authorList>
    </citation>
    <scope>NUCLEOTIDE SEQUENCE [LARGE SCALE GENOMIC DNA]</scope>
    <scope>GENOME REANNOTATION</scope>
    <source>
        <strain>B05.10</strain>
    </source>
</reference>
<evidence type="ECO:0000255" key="1">
    <source>
        <dbReference type="HAMAP-Rule" id="MF_03217"/>
    </source>
</evidence>
<evidence type="ECO:0000256" key="2">
    <source>
        <dbReference type="SAM" id="MobiDB-lite"/>
    </source>
</evidence>
<sequence>MSTSSMKSQDSNGLRERINNGSATNDDNMTARCGSEPPSEDFELDKDKKTFGRTPDGTIFTVPQTHDMVSQLLDPRQPKNLSDLIVLVILALHIFALYALPSSLKRPVFAVIFLFWRGCYNVGIGYLLHIQSHHKRIVAWAKKWNLFENPVTGKNPRPWLYQLIKTELETKIPEDYKFEQAPIEYNTWLVFRRVVDLILMCDFTSYCLFAIACGGAPSDEGLVMSTLRWGAGIILVLFNLWVKLDAHRVVKDYAWYWGDFFYLIDQELTFDGVFEMAPHPMYSVGYAGYYGISMMAASYSVLAISIVAHMAQFAFLLVVENPHIDKTYNPPPPRKHQDNPTPSDIDHANALASSKEGLEYSLDSSPTQTPPLNTTQPLAVHNLMGLGNIDLFRITDVSILLLLGYVFLITALTPSTPVYQALFVINAMFWRLWYSVGLGIILDRQSSKKMWTRHFVKYGDSTEEAWRQWKGMYHLSMTMCYASFIAATWKMYSIPSDWAYGLVLLRHVLGAGLVSLQLWTAISIYESLGEFGWFFGDFFFDHAPKLTYSGIYRYLNNPERIIGLAGIWGAVFITGSRAIFCLALLSHTLTLAFLQFVEKPHMQKLYGRNLRSEAGLSKSIKRSLPPQIKKWHGNVDRVLEETGHFVEEFLDAARPKLAAGVSTIFRDTSALFSQYPARLTLTRIAPDLAGYDPRDYSVTIEGTSSDSALHKRTTSKEGITARIPQERMDGFKPLVFEYGAPIKVKWTAPTKHSKADWIGMYMVADNASREVTRIPSAGRWVATVPNEYESSPADQGILVSNRFVSGSKRIDGSTQDYVEGEMIFEGDKLFWTQGVFEFRYHHDGKHNVMAISLPFEIRIPRFDDENSNVNITLDSDNSQSQSLIRSAVEQALLPVVRNCFDRDPDIAPNSVDESFGVLVARDGKYPRRVVHAVHFMFGIEFAPEVVRADGNVRNLAWRICNAKQVLAPYSMSHSKGTNTPDVDGEKA</sequence>
<protein>
    <recommendedName>
        <fullName evidence="1">Phosphatidylethanolamine N-methyltransferase</fullName>
        <shortName evidence="1">PE methyltransferase</shortName>
        <shortName evidence="1">PEAMT</shortName>
        <shortName evidence="1">PEMT</shortName>
        <ecNumber evidence="1">2.1.1.17</ecNumber>
    </recommendedName>
</protein>
<gene>
    <name type="primary">CHO2</name>
    <name type="ORF">BC1G_08742</name>
    <name type="ORF">BCIN_12g03480</name>
</gene>
<comment type="function">
    <text evidence="1">Catalyzes the first step of the methylation pathway of phosphatidylcholine biosynthesis, the SAM-dependent methylation of phosphatidylethanolamine (PE) to phosphatidylmonomethylethanolamine (PMME).</text>
</comment>
<comment type="catalytic activity">
    <reaction evidence="1">
        <text>a 1,2-diacyl-sn-glycero-3-phosphoethanolamine + S-adenosyl-L-methionine = a 1,2-diacyl-sn-glycero-3-phospho-N-methylethanolamine + S-adenosyl-L-homocysteine + H(+)</text>
        <dbReference type="Rhea" id="RHEA:11164"/>
        <dbReference type="ChEBI" id="CHEBI:15378"/>
        <dbReference type="ChEBI" id="CHEBI:57856"/>
        <dbReference type="ChEBI" id="CHEBI:59789"/>
        <dbReference type="ChEBI" id="CHEBI:64573"/>
        <dbReference type="ChEBI" id="CHEBI:64612"/>
        <dbReference type="EC" id="2.1.1.17"/>
    </reaction>
</comment>
<comment type="pathway">
    <text evidence="1">Phospholipid metabolism; phosphatidylcholine biosynthesis.</text>
</comment>
<comment type="subcellular location">
    <subcellularLocation>
        <location evidence="1">Endoplasmic reticulum membrane</location>
        <topology evidence="1">Multi-pass membrane protein</topology>
    </subcellularLocation>
</comment>
<comment type="similarity">
    <text evidence="1">Belongs to the class VI-like SAM-binding methyltransferase superfamily. CHO2 family.</text>
</comment>